<evidence type="ECO:0000255" key="1">
    <source>
        <dbReference type="HAMAP-Rule" id="MF_00639"/>
    </source>
</evidence>
<feature type="chain" id="PRO_0000109091" description="UDP-N-acetylmuramoylalanine--D-glutamate ligase">
    <location>
        <begin position="1"/>
        <end position="449"/>
    </location>
</feature>
<feature type="binding site" evidence="1">
    <location>
        <begin position="118"/>
        <end position="124"/>
    </location>
    <ligand>
        <name>ATP</name>
        <dbReference type="ChEBI" id="CHEBI:30616"/>
    </ligand>
</feature>
<keyword id="KW-0067">ATP-binding</keyword>
<keyword id="KW-0131">Cell cycle</keyword>
<keyword id="KW-0132">Cell division</keyword>
<keyword id="KW-0133">Cell shape</keyword>
<keyword id="KW-0961">Cell wall biogenesis/degradation</keyword>
<keyword id="KW-0963">Cytoplasm</keyword>
<keyword id="KW-0436">Ligase</keyword>
<keyword id="KW-0547">Nucleotide-binding</keyword>
<keyword id="KW-0573">Peptidoglycan synthesis</keyword>
<keyword id="KW-1185">Reference proteome</keyword>
<organism>
    <name type="scientific">Staphylococcus epidermidis (strain ATCC 35984 / DSM 28319 / BCRC 17069 / CCUG 31568 / BM 3577 / RP62A)</name>
    <dbReference type="NCBI Taxonomy" id="176279"/>
    <lineage>
        <taxon>Bacteria</taxon>
        <taxon>Bacillati</taxon>
        <taxon>Bacillota</taxon>
        <taxon>Bacilli</taxon>
        <taxon>Bacillales</taxon>
        <taxon>Staphylococcaceae</taxon>
        <taxon>Staphylococcus</taxon>
    </lineage>
</organism>
<proteinExistence type="inferred from homology"/>
<reference key="1">
    <citation type="journal article" date="2005" name="J. Bacteriol.">
        <title>Insights on evolution of virulence and resistance from the complete genome analysis of an early methicillin-resistant Staphylococcus aureus strain and a biofilm-producing methicillin-resistant Staphylococcus epidermidis strain.</title>
        <authorList>
            <person name="Gill S.R."/>
            <person name="Fouts D.E."/>
            <person name="Archer G.L."/>
            <person name="Mongodin E.F."/>
            <person name="DeBoy R.T."/>
            <person name="Ravel J."/>
            <person name="Paulsen I.T."/>
            <person name="Kolonay J.F."/>
            <person name="Brinkac L.M."/>
            <person name="Beanan M.J."/>
            <person name="Dodson R.J."/>
            <person name="Daugherty S.C."/>
            <person name="Madupu R."/>
            <person name="Angiuoli S.V."/>
            <person name="Durkin A.S."/>
            <person name="Haft D.H."/>
            <person name="Vamathevan J.J."/>
            <person name="Khouri H."/>
            <person name="Utterback T.R."/>
            <person name="Lee C."/>
            <person name="Dimitrov G."/>
            <person name="Jiang L."/>
            <person name="Qin H."/>
            <person name="Weidman J."/>
            <person name="Tran K."/>
            <person name="Kang K.H."/>
            <person name="Hance I.R."/>
            <person name="Nelson K.E."/>
            <person name="Fraser C.M."/>
        </authorList>
    </citation>
    <scope>NUCLEOTIDE SEQUENCE [LARGE SCALE GENOMIC DNA]</scope>
    <source>
        <strain>ATCC 35984 / DSM 28319 / BCRC 17069 / CCUG 31568 / BM 3577 / RP62A</strain>
    </source>
</reference>
<dbReference type="EC" id="6.3.2.9" evidence="1"/>
<dbReference type="EMBL" id="CP000029">
    <property type="protein sequence ID" value="AAW54136.1"/>
    <property type="molecule type" value="Genomic_DNA"/>
</dbReference>
<dbReference type="RefSeq" id="WP_002486280.1">
    <property type="nucleotide sequence ID" value="NC_002976.3"/>
</dbReference>
<dbReference type="SMR" id="Q5HQ09"/>
<dbReference type="STRING" id="176279.SERP0748"/>
<dbReference type="KEGG" id="ser:SERP0748"/>
<dbReference type="eggNOG" id="COG0771">
    <property type="taxonomic scope" value="Bacteria"/>
</dbReference>
<dbReference type="HOGENOM" id="CLU_032540_0_1_9"/>
<dbReference type="UniPathway" id="UPA00219"/>
<dbReference type="Proteomes" id="UP000000531">
    <property type="component" value="Chromosome"/>
</dbReference>
<dbReference type="GO" id="GO:0005737">
    <property type="term" value="C:cytoplasm"/>
    <property type="evidence" value="ECO:0007669"/>
    <property type="project" value="UniProtKB-SubCell"/>
</dbReference>
<dbReference type="GO" id="GO:0005524">
    <property type="term" value="F:ATP binding"/>
    <property type="evidence" value="ECO:0007669"/>
    <property type="project" value="UniProtKB-UniRule"/>
</dbReference>
<dbReference type="GO" id="GO:0008764">
    <property type="term" value="F:UDP-N-acetylmuramoylalanine-D-glutamate ligase activity"/>
    <property type="evidence" value="ECO:0007669"/>
    <property type="project" value="UniProtKB-UniRule"/>
</dbReference>
<dbReference type="GO" id="GO:0051301">
    <property type="term" value="P:cell division"/>
    <property type="evidence" value="ECO:0007669"/>
    <property type="project" value="UniProtKB-KW"/>
</dbReference>
<dbReference type="GO" id="GO:0071555">
    <property type="term" value="P:cell wall organization"/>
    <property type="evidence" value="ECO:0007669"/>
    <property type="project" value="UniProtKB-KW"/>
</dbReference>
<dbReference type="GO" id="GO:0009252">
    <property type="term" value="P:peptidoglycan biosynthetic process"/>
    <property type="evidence" value="ECO:0007669"/>
    <property type="project" value="UniProtKB-UniRule"/>
</dbReference>
<dbReference type="GO" id="GO:0008360">
    <property type="term" value="P:regulation of cell shape"/>
    <property type="evidence" value="ECO:0007669"/>
    <property type="project" value="UniProtKB-KW"/>
</dbReference>
<dbReference type="Gene3D" id="3.90.190.20">
    <property type="entry name" value="Mur ligase, C-terminal domain"/>
    <property type="match status" value="1"/>
</dbReference>
<dbReference type="Gene3D" id="3.40.1190.10">
    <property type="entry name" value="Mur-like, catalytic domain"/>
    <property type="match status" value="1"/>
</dbReference>
<dbReference type="Gene3D" id="3.40.50.720">
    <property type="entry name" value="NAD(P)-binding Rossmann-like Domain"/>
    <property type="match status" value="1"/>
</dbReference>
<dbReference type="HAMAP" id="MF_00639">
    <property type="entry name" value="MurD"/>
    <property type="match status" value="1"/>
</dbReference>
<dbReference type="InterPro" id="IPR036565">
    <property type="entry name" value="Mur-like_cat_sf"/>
</dbReference>
<dbReference type="InterPro" id="IPR004101">
    <property type="entry name" value="Mur_ligase_C"/>
</dbReference>
<dbReference type="InterPro" id="IPR036615">
    <property type="entry name" value="Mur_ligase_C_dom_sf"/>
</dbReference>
<dbReference type="InterPro" id="IPR013221">
    <property type="entry name" value="Mur_ligase_cen"/>
</dbReference>
<dbReference type="InterPro" id="IPR005762">
    <property type="entry name" value="MurD"/>
</dbReference>
<dbReference type="NCBIfam" id="TIGR01087">
    <property type="entry name" value="murD"/>
    <property type="match status" value="1"/>
</dbReference>
<dbReference type="PANTHER" id="PTHR43692">
    <property type="entry name" value="UDP-N-ACETYLMURAMOYLALANINE--D-GLUTAMATE LIGASE"/>
    <property type="match status" value="1"/>
</dbReference>
<dbReference type="PANTHER" id="PTHR43692:SF1">
    <property type="entry name" value="UDP-N-ACETYLMURAMOYLALANINE--D-GLUTAMATE LIGASE"/>
    <property type="match status" value="1"/>
</dbReference>
<dbReference type="Pfam" id="PF02875">
    <property type="entry name" value="Mur_ligase_C"/>
    <property type="match status" value="1"/>
</dbReference>
<dbReference type="Pfam" id="PF08245">
    <property type="entry name" value="Mur_ligase_M"/>
    <property type="match status" value="1"/>
</dbReference>
<dbReference type="Pfam" id="PF21799">
    <property type="entry name" value="MurD-like_N"/>
    <property type="match status" value="1"/>
</dbReference>
<dbReference type="SUPFAM" id="SSF51984">
    <property type="entry name" value="MurCD N-terminal domain"/>
    <property type="match status" value="1"/>
</dbReference>
<dbReference type="SUPFAM" id="SSF53623">
    <property type="entry name" value="MurD-like peptide ligases, catalytic domain"/>
    <property type="match status" value="1"/>
</dbReference>
<dbReference type="SUPFAM" id="SSF53244">
    <property type="entry name" value="MurD-like peptide ligases, peptide-binding domain"/>
    <property type="match status" value="1"/>
</dbReference>
<protein>
    <recommendedName>
        <fullName evidence="1">UDP-N-acetylmuramoylalanine--D-glutamate ligase</fullName>
        <ecNumber evidence="1">6.3.2.9</ecNumber>
    </recommendedName>
    <alternativeName>
        <fullName evidence="1">D-glutamic acid-adding enzyme</fullName>
    </alternativeName>
    <alternativeName>
        <fullName evidence="1">UDP-N-acetylmuramoyl-L-alanyl-D-glutamate synthetase</fullName>
    </alternativeName>
</protein>
<gene>
    <name evidence="1" type="primary">murD</name>
    <name type="ordered locus">SERP0748</name>
</gene>
<comment type="function">
    <text evidence="1">Cell wall formation. Catalyzes the addition of glutamate to the nucleotide precursor UDP-N-acetylmuramoyl-L-alanine (UMA).</text>
</comment>
<comment type="catalytic activity">
    <reaction evidence="1">
        <text>UDP-N-acetyl-alpha-D-muramoyl-L-alanine + D-glutamate + ATP = UDP-N-acetyl-alpha-D-muramoyl-L-alanyl-D-glutamate + ADP + phosphate + H(+)</text>
        <dbReference type="Rhea" id="RHEA:16429"/>
        <dbReference type="ChEBI" id="CHEBI:15378"/>
        <dbReference type="ChEBI" id="CHEBI:29986"/>
        <dbReference type="ChEBI" id="CHEBI:30616"/>
        <dbReference type="ChEBI" id="CHEBI:43474"/>
        <dbReference type="ChEBI" id="CHEBI:83898"/>
        <dbReference type="ChEBI" id="CHEBI:83900"/>
        <dbReference type="ChEBI" id="CHEBI:456216"/>
        <dbReference type="EC" id="6.3.2.9"/>
    </reaction>
</comment>
<comment type="pathway">
    <text evidence="1">Cell wall biogenesis; peptidoglycan biosynthesis.</text>
</comment>
<comment type="subcellular location">
    <subcellularLocation>
        <location evidence="1">Cytoplasm</location>
    </subcellularLocation>
</comment>
<comment type="similarity">
    <text evidence="1">Belongs to the MurCDEF family.</text>
</comment>
<name>MURD_STAEQ</name>
<sequence>MLNYTELENKNVLVVGLAKSGYEAAKLLLKLGANVKVNDGKDLSQDAHAKDLESMGIEVISGSHPFSLLDDNPIIVKNPGIPYTVSIIEEAAKRGLKILTEVELSYLISEAPIIAVTGTNGKTTVTSLIGDMFQKSVLTGRLSGNIGYVASNVAQEVKSDEYLITELSSFQLLGIEKYKPHIAIITNIYSAHLDYHETLENYQNAKKQIYKNQTKDDYLICNYHQRHLIESENLEAKTFYFSTQQEVDGIYIKDGFIVFNGIRIINTKDLVLPGEHNLENILAAVLASIIAGVPVKAIVDSLVTFSGIDHRLQYIGTNRTNKYYNDSKATNTLATQFALNSFDQPIIWLCGGLDRGNEFDELIPYMENVRVMVVFGETQDKFAKLGNSQGKYVIKATDVEDAVDKIQDIVEPNDVVLLSPACASWDQYHTFEERGEKFIDRFRAHLPSY</sequence>
<accession>Q5HQ09</accession>